<sequence>MNPLVTLIIYITLISGTIITMTSSHWLTVWMGLEMNMFAIIPLIMKTHTPRAIEATTKYFLIQASASMLLLMAATINFMEFGQWTVIDMPSPIASTIILAAIMMKLGMAPFHFWVPEVTQGTLLSTSLIILTWQKLAPLSILYQIYPSMNPKIILASAMLSIMIGGWGGLNQTQLRKIMAYSSIAHMGWMSAILIYNPSLMLLNLTLYIIFTITMFTILIHCMATSNKTLSMMWNNTPILMMTLLLTLLSMGGLPPLSGFVPKWLIINEMITNNNITISLTMAMLALLNLYFYMRLIYSSSLTLFPSSNNMKFKWKMNNTPKLPFLPTLTIISILMLPITPMMFIFE</sequence>
<geneLocation type="mitochondrion"/>
<accession>Q71MY2</accession>
<organism>
    <name type="scientific">Oryzorictes hova</name>
    <name type="common">Hova rice tenrec</name>
    <dbReference type="NCBI Taxonomy" id="319817"/>
    <lineage>
        <taxon>Eukaryota</taxon>
        <taxon>Metazoa</taxon>
        <taxon>Chordata</taxon>
        <taxon>Craniata</taxon>
        <taxon>Vertebrata</taxon>
        <taxon>Euteleostomi</taxon>
        <taxon>Mammalia</taxon>
        <taxon>Eutheria</taxon>
        <taxon>Afrotheria</taxon>
        <taxon>Tenrecidae</taxon>
        <taxon>Oryzorictinae</taxon>
        <taxon>Oryzorictes</taxon>
    </lineage>
</organism>
<reference key="1">
    <citation type="submission" date="2001-10" db="EMBL/GenBank/DDBJ databases">
        <title>Molecular systematics of Lipotyphla: evidence from mitochondrial genes 12S rRNA and NADH2.</title>
        <authorList>
            <person name="Emerson G.L."/>
            <person name="Allard M.W."/>
        </authorList>
    </citation>
    <scope>NUCLEOTIDE SEQUENCE [GENOMIC DNA]</scope>
</reference>
<name>NU2M_ORYTA</name>
<proteinExistence type="inferred from homology"/>
<dbReference type="EC" id="7.1.1.2"/>
<dbReference type="EMBL" id="AF434836">
    <property type="protein sequence ID" value="AAN76685.1"/>
    <property type="molecule type" value="Genomic_DNA"/>
</dbReference>
<dbReference type="SMR" id="Q71MY2"/>
<dbReference type="GO" id="GO:0005743">
    <property type="term" value="C:mitochondrial inner membrane"/>
    <property type="evidence" value="ECO:0007669"/>
    <property type="project" value="UniProtKB-SubCell"/>
</dbReference>
<dbReference type="GO" id="GO:0008137">
    <property type="term" value="F:NADH dehydrogenase (ubiquinone) activity"/>
    <property type="evidence" value="ECO:0007669"/>
    <property type="project" value="UniProtKB-EC"/>
</dbReference>
<dbReference type="GO" id="GO:0006120">
    <property type="term" value="P:mitochondrial electron transport, NADH to ubiquinone"/>
    <property type="evidence" value="ECO:0007669"/>
    <property type="project" value="InterPro"/>
</dbReference>
<dbReference type="InterPro" id="IPR050175">
    <property type="entry name" value="Complex_I_Subunit_2"/>
</dbReference>
<dbReference type="InterPro" id="IPR010933">
    <property type="entry name" value="NADH_DH_su2_C"/>
</dbReference>
<dbReference type="InterPro" id="IPR003917">
    <property type="entry name" value="NADH_UbQ_OxRdtase_chain2"/>
</dbReference>
<dbReference type="InterPro" id="IPR001750">
    <property type="entry name" value="ND/Mrp_TM"/>
</dbReference>
<dbReference type="PANTHER" id="PTHR46552">
    <property type="entry name" value="NADH-UBIQUINONE OXIDOREDUCTASE CHAIN 2"/>
    <property type="match status" value="1"/>
</dbReference>
<dbReference type="PANTHER" id="PTHR46552:SF1">
    <property type="entry name" value="NADH-UBIQUINONE OXIDOREDUCTASE CHAIN 2"/>
    <property type="match status" value="1"/>
</dbReference>
<dbReference type="Pfam" id="PF06444">
    <property type="entry name" value="NADH_dehy_S2_C"/>
    <property type="match status" value="1"/>
</dbReference>
<dbReference type="Pfam" id="PF00361">
    <property type="entry name" value="Proton_antipo_M"/>
    <property type="match status" value="1"/>
</dbReference>
<dbReference type="PRINTS" id="PR01436">
    <property type="entry name" value="NADHDHGNASE2"/>
</dbReference>
<feature type="chain" id="PRO_0000256673" description="NADH-ubiquinone oxidoreductase chain 2">
    <location>
        <begin position="1"/>
        <end position="347"/>
    </location>
</feature>
<feature type="transmembrane region" description="Helical" evidence="3">
    <location>
        <begin position="1"/>
        <end position="21"/>
    </location>
</feature>
<feature type="transmembrane region" description="Helical" evidence="3">
    <location>
        <begin position="25"/>
        <end position="45"/>
    </location>
</feature>
<feature type="transmembrane region" description="Helical" evidence="3">
    <location>
        <begin position="59"/>
        <end position="79"/>
    </location>
</feature>
<feature type="transmembrane region" description="Helical" evidence="3">
    <location>
        <begin position="96"/>
        <end position="116"/>
    </location>
</feature>
<feature type="transmembrane region" description="Helical" evidence="3">
    <location>
        <begin position="123"/>
        <end position="143"/>
    </location>
</feature>
<feature type="transmembrane region" description="Helical" evidence="3">
    <location>
        <begin position="153"/>
        <end position="173"/>
    </location>
</feature>
<feature type="transmembrane region" description="Helical" evidence="3">
    <location>
        <begin position="178"/>
        <end position="198"/>
    </location>
</feature>
<feature type="transmembrane region" description="Helical" evidence="3">
    <location>
        <begin position="200"/>
        <end position="220"/>
    </location>
</feature>
<feature type="transmembrane region" description="Helical" evidence="3">
    <location>
        <begin position="239"/>
        <end position="259"/>
    </location>
</feature>
<feature type="transmembrane region" description="Helical" evidence="3">
    <location>
        <begin position="278"/>
        <end position="298"/>
    </location>
</feature>
<feature type="transmembrane region" description="Helical" evidence="3">
    <location>
        <begin position="325"/>
        <end position="345"/>
    </location>
</feature>
<evidence type="ECO:0000250" key="1"/>
<evidence type="ECO:0000250" key="2">
    <source>
        <dbReference type="UniProtKB" id="P03891"/>
    </source>
</evidence>
<evidence type="ECO:0000255" key="3"/>
<evidence type="ECO:0000305" key="4"/>
<gene>
    <name evidence="2" type="primary">MT-ND2</name>
    <name type="synonym">MTND2</name>
    <name type="synonym">NADH2</name>
    <name type="synonym">ND2</name>
</gene>
<comment type="function">
    <text evidence="1">Core subunit of the mitochondrial membrane respiratory chain NADH dehydrogenase (Complex I) that is believed to belong to the minimal assembly required for catalysis. Complex I functions in the transfer of electrons from NADH to the respiratory chain. The immediate electron acceptor for the enzyme is believed to be ubiquinone (By similarity).</text>
</comment>
<comment type="catalytic activity">
    <reaction>
        <text>a ubiquinone + NADH + 5 H(+)(in) = a ubiquinol + NAD(+) + 4 H(+)(out)</text>
        <dbReference type="Rhea" id="RHEA:29091"/>
        <dbReference type="Rhea" id="RHEA-COMP:9565"/>
        <dbReference type="Rhea" id="RHEA-COMP:9566"/>
        <dbReference type="ChEBI" id="CHEBI:15378"/>
        <dbReference type="ChEBI" id="CHEBI:16389"/>
        <dbReference type="ChEBI" id="CHEBI:17976"/>
        <dbReference type="ChEBI" id="CHEBI:57540"/>
        <dbReference type="ChEBI" id="CHEBI:57945"/>
        <dbReference type="EC" id="7.1.1.2"/>
    </reaction>
</comment>
<comment type="subunit">
    <text evidence="2">Core subunit of respiratory chain NADH dehydrogenase (Complex I) which is composed of 45 different subunits. Interacts with TMEM242.</text>
</comment>
<comment type="subcellular location">
    <subcellularLocation>
        <location>Mitochondrion inner membrane</location>
        <topology>Multi-pass membrane protein</topology>
    </subcellularLocation>
</comment>
<comment type="similarity">
    <text evidence="4">Belongs to the complex I subunit 2 family.</text>
</comment>
<protein>
    <recommendedName>
        <fullName evidence="2">NADH-ubiquinone oxidoreductase chain 2</fullName>
        <ecNumber>7.1.1.2</ecNumber>
    </recommendedName>
    <alternativeName>
        <fullName>NADH dehydrogenase subunit 2</fullName>
    </alternativeName>
</protein>
<keyword id="KW-0249">Electron transport</keyword>
<keyword id="KW-0472">Membrane</keyword>
<keyword id="KW-0496">Mitochondrion</keyword>
<keyword id="KW-0999">Mitochondrion inner membrane</keyword>
<keyword id="KW-0520">NAD</keyword>
<keyword id="KW-0679">Respiratory chain</keyword>
<keyword id="KW-1278">Translocase</keyword>
<keyword id="KW-0812">Transmembrane</keyword>
<keyword id="KW-1133">Transmembrane helix</keyword>
<keyword id="KW-0813">Transport</keyword>
<keyword id="KW-0830">Ubiquinone</keyword>